<accession>Q8WPC2</accession>
<comment type="function">
    <text evidence="3 4">Involved in modulation of blood-feeding behavior and capacity in female mosquitoes (PubMed:22479185, PubMed:34634943). Required for normal oviposition (PubMed:34634943). Required for normal fecundity and fertility of female mosquitoes (PubMed:34634943). Required for normal expression of VGA1 gene, which encodes the egg yolk protein vitellogenin-A1 (PubMed:34634943). Required for normal female longevity when mosquitoes are maintained on regular sugar meal (PubMed:34634943).</text>
</comment>
<comment type="function">
    <text evidence="4">(Microbial infection) Facilitates shedding of dengue virus type 2 particles into mosquito saliva (PubMed:34634943). Does not affect dengue virus type 2 replication or infection prevalence in midgut and salivary glands at 14 days after blood feeding (PubMed:34634943).</text>
</comment>
<comment type="function">
    <text evidence="4">(Microbial infection) Facilitates shedding of Zika virus particles into mosquito saliva (PubMed:34634943). Does not affect Zika virus replication or infection prevalence in midgut and salivary glands at 14 days after blood feeding (PubMed:34634943).</text>
</comment>
<comment type="subcellular location">
    <subcellularLocation>
        <location evidence="7">Secreted</location>
    </subcellularLocation>
</comment>
<comment type="tissue specificity">
    <text evidence="2 3 4">High-level expression in female mouth parts, particularly in the proboscis (at protein level) (PubMed:34634943). Low-level expression in female antenna (at protein level) (PubMed:34634943). Female salivary gland (PubMed:22479185). Female chemosensory organs: antenna, palp and proboscis (PubMed:15978998, PubMed:22479185). Male antenna, wing and maxillary palp (PubMed:15978998). Expressed at higher levels in male tissues compared to female tissues (PubMed:15978998). Not detected in midgut (PubMed:34634943).</text>
</comment>
<comment type="developmental stage">
    <text evidence="2">Levels increase in adult males from day 1 to day 7.</text>
</comment>
<comment type="induction">
    <text evidence="3">(Microbial infection) Up-regulated in salivary glands following dengue virus type 2 infection (PubMed:22479185). Up-regulated in chemosensory organs: antennae, palps and proboscis, following dengue virus type 2 infection (PubMed:22479185).</text>
</comment>
<comment type="disruption phenotype">
    <text evidence="3">(Microbial infection) RNAi-mediated knockdown results in increased probing initiation time.</text>
</comment>
<comment type="similarity">
    <text evidence="7">Belongs to the PBP/GOBP family.</text>
</comment>
<dbReference type="EMBL" id="AY062130">
    <property type="protein sequence ID" value="AAL38244.1"/>
    <property type="molecule type" value="mRNA"/>
</dbReference>
<dbReference type="EMBL" id="AY062131">
    <property type="protein sequence ID" value="AAL38245.1"/>
    <property type="molecule type" value="Genomic_DNA"/>
</dbReference>
<dbReference type="RefSeq" id="XP_001658489.1">
    <property type="nucleotide sequence ID" value="XM_001658439.2"/>
</dbReference>
<dbReference type="SMR" id="Q8WPC2"/>
<dbReference type="STRING" id="7159.Q8WPC2"/>
<dbReference type="PaxDb" id="7159-AAEL007603-PA"/>
<dbReference type="EnsemblMetazoa" id="AAEL007603-RA">
    <property type="protein sequence ID" value="AAEL007603-PA"/>
    <property type="gene ID" value="AAEL007603"/>
</dbReference>
<dbReference type="GeneID" id="5569397"/>
<dbReference type="KEGG" id="aag:5569397"/>
<dbReference type="VEuPathDB" id="VectorBase:AAEL007603"/>
<dbReference type="eggNOG" id="ENOG502THWG">
    <property type="taxonomic scope" value="Eukaryota"/>
</dbReference>
<dbReference type="HOGENOM" id="CLU_107288_3_1_1"/>
<dbReference type="InParanoid" id="Q8WPC2"/>
<dbReference type="OMA" id="IRRTNPC"/>
<dbReference type="OrthoDB" id="7665616at2759"/>
<dbReference type="Proteomes" id="UP000008820">
    <property type="component" value="Chromosome 3"/>
</dbReference>
<dbReference type="GO" id="GO:0005615">
    <property type="term" value="C:extracellular space"/>
    <property type="evidence" value="ECO:0007669"/>
    <property type="project" value="TreeGrafter"/>
</dbReference>
<dbReference type="GO" id="GO:0005549">
    <property type="term" value="F:odorant binding"/>
    <property type="evidence" value="ECO:0007669"/>
    <property type="project" value="InterPro"/>
</dbReference>
<dbReference type="GO" id="GO:0007608">
    <property type="term" value="P:sensory perception of smell"/>
    <property type="evidence" value="ECO:0007669"/>
    <property type="project" value="TreeGrafter"/>
</dbReference>
<dbReference type="CDD" id="cd23992">
    <property type="entry name" value="PBP_GOBP"/>
    <property type="match status" value="1"/>
</dbReference>
<dbReference type="FunFam" id="1.10.238.20:FF:000001">
    <property type="entry name" value="General odorant-binding protein lush"/>
    <property type="match status" value="1"/>
</dbReference>
<dbReference type="Gene3D" id="1.10.238.20">
    <property type="entry name" value="Pheromone/general odorant binding protein domain"/>
    <property type="match status" value="1"/>
</dbReference>
<dbReference type="InterPro" id="IPR006170">
    <property type="entry name" value="PBP/GOBP"/>
</dbReference>
<dbReference type="InterPro" id="IPR036728">
    <property type="entry name" value="PBP_GOBP_sf"/>
</dbReference>
<dbReference type="PANTHER" id="PTHR11857:SF43">
    <property type="entry name" value="GEO07291P1-RELATED"/>
    <property type="match status" value="1"/>
</dbReference>
<dbReference type="PANTHER" id="PTHR11857">
    <property type="entry name" value="ODORANT BINDING PROTEIN-RELATED"/>
    <property type="match status" value="1"/>
</dbReference>
<dbReference type="Pfam" id="PF01395">
    <property type="entry name" value="PBP_GOBP"/>
    <property type="match status" value="1"/>
</dbReference>
<dbReference type="SMART" id="SM00708">
    <property type="entry name" value="PhBP"/>
    <property type="match status" value="1"/>
</dbReference>
<dbReference type="SUPFAM" id="SSF47565">
    <property type="entry name" value="Insect pheromone/odorant-binding proteins"/>
    <property type="match status" value="1"/>
</dbReference>
<sequence length="140" mass="15911">MTSFRLANLTVFLVLLFCFMRGVHSADDLSKIPEIKGYELHCIEASGITESSAKKLRNGDDIASPDQSIKCYVQCFFSKLRLMNEKGVVQKDKVLSLLGKLMEEDKAKKLAEKCDLRRTNPCDTAYAMYDCYRQNKAKLL</sequence>
<evidence type="ECO:0000255" key="1"/>
<evidence type="ECO:0000269" key="2">
    <source>
    </source>
</evidence>
<evidence type="ECO:0000269" key="3">
    <source>
    </source>
</evidence>
<evidence type="ECO:0000269" key="4">
    <source>
    </source>
</evidence>
<evidence type="ECO:0000303" key="5">
    <source>
    </source>
</evidence>
<evidence type="ECO:0000303" key="6">
    <source>
    </source>
</evidence>
<evidence type="ECO:0000305" key="7"/>
<evidence type="ECO:0000312" key="8">
    <source>
        <dbReference type="EMBL" id="AAL38244.1"/>
    </source>
</evidence>
<evidence type="ECO:0000312" key="9">
    <source>
        <dbReference type="EMBL" id="AAL38245.1"/>
    </source>
</evidence>
<evidence type="ECO:0000312" key="10">
    <source>
        <dbReference type="Proteomes" id="UP000008820"/>
    </source>
</evidence>
<protein>
    <recommendedName>
        <fullName evidence="5 6">Odorant-binding protein 10</fullName>
        <shortName evidence="5">Aaeg-OBP10</shortName>
        <shortName evidence="6">OBP10</shortName>
    </recommendedName>
</protein>
<name>OBP10_AEDAE</name>
<feature type="signal peptide" evidence="1">
    <location>
        <begin position="1"/>
        <end position="25"/>
    </location>
</feature>
<feature type="chain" id="PRO_5014312406" description="Odorant-binding protein 10" evidence="1">
    <location>
        <begin position="26"/>
        <end position="140"/>
    </location>
</feature>
<keyword id="KW-0085">Behavior</keyword>
<keyword id="KW-1185">Reference proteome</keyword>
<keyword id="KW-0964">Secreted</keyword>
<keyword id="KW-0732">Signal</keyword>
<reference evidence="8 9" key="1">
    <citation type="journal article" date="2005" name="Insect Biochem. Mol. Biol.">
        <title>Antennal expressed genes of the yellow fever mosquito (Aedes aegypti L.); characterization of odorant-binding protein 10 and takeout.</title>
        <authorList>
            <person name="Bohbot J."/>
            <person name="Vogt R.G."/>
        </authorList>
    </citation>
    <scope>NUCLEOTIDE SEQUENCE [GENOMIC DNA / MRNA]</scope>
    <scope>TISSUE SPECIFICITY</scope>
    <scope>DEVELOPMENTAL STAGE</scope>
</reference>
<reference evidence="10" key="2">
    <citation type="journal article" date="2018" name="Nature">
        <title>Improved reference genome of Aedes aegypti informs arbovirus vector control.</title>
        <authorList>
            <person name="Matthews B.J."/>
            <person name="Dudchenko O."/>
            <person name="Kingan S.B."/>
            <person name="Koren S."/>
            <person name="Antoshechkin I."/>
            <person name="Crawford J.E."/>
            <person name="Glassford W.J."/>
            <person name="Herre M."/>
            <person name="Redmond S.N."/>
            <person name="Rose N.H."/>
            <person name="Weedall G.D."/>
            <person name="Wu Y."/>
            <person name="Batra S.S."/>
            <person name="Brito-Sierra C.A."/>
            <person name="Buckingham S.D."/>
            <person name="Campbell C.L."/>
            <person name="Chan S."/>
            <person name="Cox E."/>
            <person name="Evans B.R."/>
            <person name="Fansiri T."/>
            <person name="Filipovic I."/>
            <person name="Fontaine A."/>
            <person name="Gloria-Soria A."/>
            <person name="Hall R."/>
            <person name="Joardar V.S."/>
            <person name="Jones A.K."/>
            <person name="Kay R.G.G."/>
            <person name="Kodali V.K."/>
            <person name="Lee J."/>
            <person name="Lycett G.J."/>
            <person name="Mitchell S.N."/>
            <person name="Muehling J."/>
            <person name="Murphy M.R."/>
            <person name="Omer A.D."/>
            <person name="Partridge F.A."/>
            <person name="Peluso P."/>
            <person name="Aiden A.P."/>
            <person name="Ramasamy V."/>
            <person name="Rasic G."/>
            <person name="Roy S."/>
            <person name="Saavedra-Rodriguez K."/>
            <person name="Sharan S."/>
            <person name="Sharma A."/>
            <person name="Smith M.L."/>
            <person name="Turner J."/>
            <person name="Weakley A.M."/>
            <person name="Zhao Z."/>
            <person name="Akbari O.S."/>
            <person name="Black W.C. IV"/>
            <person name="Cao H."/>
            <person name="Darby A.C."/>
            <person name="Hill C.A."/>
            <person name="Johnston J.S."/>
            <person name="Murphy T.D."/>
            <person name="Raikhel A.S."/>
            <person name="Sattelle D.B."/>
            <person name="Sharakhov I.V."/>
            <person name="White B.J."/>
            <person name="Zhao L."/>
            <person name="Aiden E.L."/>
            <person name="Mann R.S."/>
            <person name="Lambrechts L."/>
            <person name="Powell J.R."/>
            <person name="Sharakhova M.V."/>
            <person name="Tu Z."/>
            <person name="Robertson H.M."/>
            <person name="McBride C.S."/>
            <person name="Hastie A.R."/>
            <person name="Korlach J."/>
            <person name="Neafsey D.E."/>
            <person name="Phillippy A.M."/>
            <person name="Vosshall L.B."/>
        </authorList>
    </citation>
    <scope>NUCLEOTIDE SEQUENCE [LARGE SCALE GENOMIC DNA]</scope>
    <source>
        <strain evidence="10">LVP_AGWG</strain>
    </source>
</reference>
<reference evidence="7" key="3">
    <citation type="journal article" date="2012" name="PLoS Pathog.">
        <title>Dengue virus infection of the Aedes aegypti salivary gland and chemosensory apparatus induces genes that modulate infection and blood-feeding behavior.</title>
        <authorList>
            <person name="Sim S."/>
            <person name="Ramirez J.L."/>
            <person name="Dimopoulos G."/>
        </authorList>
    </citation>
    <scope>FUNCTION</scope>
    <scope>TISSUE SPECIFICITY</scope>
    <scope>INDUCTION (MICROBIAL INFECTION)</scope>
    <scope>DISRUPTION PHENOTYPE (MICROBIAL INFECTION)</scope>
</reference>
<reference evidence="7" key="4">
    <citation type="journal article" date="2021" name="MBio">
        <title>Pleiotropic Odorant-Binding Proteins Promote Aedes aegypti Reproduction and Flavivirus Transmission.</title>
        <authorList>
            <person name="Dong S."/>
            <person name="Ye Z."/>
            <person name="Tikhe C.V."/>
            <person name="Tu Z.J."/>
            <person name="Zwiebel L.J."/>
            <person name="Dimopoulos G."/>
        </authorList>
    </citation>
    <scope>FUNCTION</scope>
    <scope>FUNCTION (MICROBIAL INFECTION)</scope>
    <scope>TISSUE SPECIFICITY</scope>
</reference>
<organism evidence="10">
    <name type="scientific">Aedes aegypti</name>
    <name type="common">Yellowfever mosquito</name>
    <name type="synonym">Culex aegypti</name>
    <dbReference type="NCBI Taxonomy" id="7159"/>
    <lineage>
        <taxon>Eukaryota</taxon>
        <taxon>Metazoa</taxon>
        <taxon>Ecdysozoa</taxon>
        <taxon>Arthropoda</taxon>
        <taxon>Hexapoda</taxon>
        <taxon>Insecta</taxon>
        <taxon>Pterygota</taxon>
        <taxon>Neoptera</taxon>
        <taxon>Endopterygota</taxon>
        <taxon>Diptera</taxon>
        <taxon>Nematocera</taxon>
        <taxon>Culicoidea</taxon>
        <taxon>Culicidae</taxon>
        <taxon>Culicinae</taxon>
        <taxon>Aedini</taxon>
        <taxon>Aedes</taxon>
        <taxon>Stegomyia</taxon>
    </lineage>
</organism>
<proteinExistence type="evidence at protein level"/>